<gene>
    <name evidence="14" type="primary">rhlR</name>
    <name evidence="15" type="synonym">lasM</name>
    <name evidence="13" type="synonym">vsmR</name>
    <name type="ordered locus">PA3477</name>
</gene>
<sequence length="241" mass="27578">MRNDGGFLLWWDGLRSEMQPIHDSQGVFAVLEKEVRRLGFDYYAYGVRHTIPFTRPKTEVHGTYPKAWLERYQMQNYGAVDPAILNGLRSSEMVVWSDSLFDQSRMLWNEARDWGLCVGATLPIRAPNNLLSVLSVARDQQNISSFEREEIRLRLRCMIELLTQKLTDLEHPMLMSNPVCLSHREREILQWTADGKSSGEIAIILSISESTVNFHHKNIQKKFDAPNKTLAAAYAAALGLI</sequence>
<evidence type="ECO:0000255" key="1">
    <source>
        <dbReference type="PROSITE-ProRule" id="PRU00411"/>
    </source>
</evidence>
<evidence type="ECO:0000269" key="2">
    <source>
    </source>
</evidence>
<evidence type="ECO:0000269" key="3">
    <source>
    </source>
</evidence>
<evidence type="ECO:0000269" key="4">
    <source>
    </source>
</evidence>
<evidence type="ECO:0000269" key="5">
    <source>
    </source>
</evidence>
<evidence type="ECO:0000269" key="6">
    <source>
    </source>
</evidence>
<evidence type="ECO:0000269" key="7">
    <source>
    </source>
</evidence>
<evidence type="ECO:0000269" key="8">
    <source>
    </source>
</evidence>
<evidence type="ECO:0000269" key="9">
    <source>
    </source>
</evidence>
<evidence type="ECO:0000269" key="10">
    <source>
    </source>
</evidence>
<evidence type="ECO:0000269" key="11">
    <source>
    </source>
</evidence>
<evidence type="ECO:0000269" key="12">
    <source>
    </source>
</evidence>
<evidence type="ECO:0000303" key="13">
    <source>
    </source>
</evidence>
<evidence type="ECO:0000303" key="14">
    <source>
    </source>
</evidence>
<evidence type="ECO:0000303" key="15">
    <source>
    </source>
</evidence>
<evidence type="ECO:0000305" key="16"/>
<evidence type="ECO:0007829" key="17">
    <source>
        <dbReference type="PDB" id="7R3G"/>
    </source>
</evidence>
<evidence type="ECO:0007829" key="18">
    <source>
        <dbReference type="PDB" id="7R3J"/>
    </source>
</evidence>
<dbReference type="EMBL" id="U40458">
    <property type="protein sequence ID" value="AAC44036.1"/>
    <property type="molecule type" value="Genomic_DNA"/>
</dbReference>
<dbReference type="EMBL" id="L08962">
    <property type="protein sequence ID" value="AAA25983.1"/>
    <property type="molecule type" value="Genomic_DNA"/>
</dbReference>
<dbReference type="EMBL" id="U15644">
    <property type="protein sequence ID" value="AAA89073.1"/>
    <property type="molecule type" value="Genomic_DNA"/>
</dbReference>
<dbReference type="EMBL" id="AE004091">
    <property type="protein sequence ID" value="AAG06865.1"/>
    <property type="molecule type" value="Genomic_DNA"/>
</dbReference>
<dbReference type="EMBL" id="L28170">
    <property type="protein sequence ID" value="AAA62130.1"/>
    <property type="molecule type" value="Genomic_DNA"/>
</dbReference>
<dbReference type="PIR" id="B83212">
    <property type="entry name" value="B83212"/>
</dbReference>
<dbReference type="PIR" id="C53652">
    <property type="entry name" value="C53652"/>
</dbReference>
<dbReference type="PIR" id="S70174">
    <property type="entry name" value="S70174"/>
</dbReference>
<dbReference type="RefSeq" id="NP_252167.1">
    <property type="nucleotide sequence ID" value="NC_002516.2"/>
</dbReference>
<dbReference type="RefSeq" id="WP_003119559.1">
    <property type="nucleotide sequence ID" value="NZ_QZGE01000039.1"/>
</dbReference>
<dbReference type="PDB" id="7R3E">
    <property type="method" value="X-ray"/>
    <property type="resolution" value="3.46 A"/>
    <property type="chains" value="A/B=1-241"/>
</dbReference>
<dbReference type="PDB" id="7R3G">
    <property type="method" value="X-ray"/>
    <property type="resolution" value="2.15 A"/>
    <property type="chains" value="A/B=1-241"/>
</dbReference>
<dbReference type="PDB" id="7R3H">
    <property type="method" value="X-ray"/>
    <property type="resolution" value="3.49 A"/>
    <property type="chains" value="A/B/C/D=1-241"/>
</dbReference>
<dbReference type="PDB" id="7R3I">
    <property type="method" value="X-ray"/>
    <property type="resolution" value="3.10 A"/>
    <property type="chains" value="A/B=1-241"/>
</dbReference>
<dbReference type="PDB" id="7R3J">
    <property type="method" value="X-ray"/>
    <property type="resolution" value="3.06 A"/>
    <property type="chains" value="C/D=1-241"/>
</dbReference>
<dbReference type="PDB" id="8B4A">
    <property type="method" value="X-ray"/>
    <property type="resolution" value="3.06 A"/>
    <property type="chains" value="C/D=1-241"/>
</dbReference>
<dbReference type="PDB" id="8DQ0">
    <property type="method" value="EM"/>
    <property type="resolution" value="3.74 A"/>
    <property type="chains" value="C/D=1-241"/>
</dbReference>
<dbReference type="PDB" id="8DQ1">
    <property type="method" value="EM"/>
    <property type="resolution" value="4.10 A"/>
    <property type="chains" value="C/D=1-241"/>
</dbReference>
<dbReference type="PDBsum" id="7R3E"/>
<dbReference type="PDBsum" id="7R3G"/>
<dbReference type="PDBsum" id="7R3H"/>
<dbReference type="PDBsum" id="7R3I"/>
<dbReference type="PDBsum" id="7R3J"/>
<dbReference type="PDBsum" id="8B4A"/>
<dbReference type="PDBsum" id="8DQ0"/>
<dbReference type="PDBsum" id="8DQ1"/>
<dbReference type="SMR" id="P54292"/>
<dbReference type="FunCoup" id="P54292">
    <property type="interactions" value="225"/>
</dbReference>
<dbReference type="STRING" id="208964.PA3477"/>
<dbReference type="BindingDB" id="P54292"/>
<dbReference type="ChEMBL" id="CHEMBL3112386"/>
<dbReference type="PaxDb" id="208964-PA3477"/>
<dbReference type="GeneID" id="77220015"/>
<dbReference type="GeneID" id="878968"/>
<dbReference type="KEGG" id="pae:PA3477"/>
<dbReference type="PATRIC" id="fig|208964.12.peg.3640"/>
<dbReference type="PseudoCAP" id="PA3477"/>
<dbReference type="HOGENOM" id="CLU_072786_7_1_6"/>
<dbReference type="InParanoid" id="P54292"/>
<dbReference type="OrthoDB" id="9774661at2"/>
<dbReference type="PhylomeDB" id="P54292"/>
<dbReference type="BioCyc" id="PAER208964:G1FZ6-3545-MONOMER"/>
<dbReference type="PHI-base" id="PHI:123420"/>
<dbReference type="PHI-base" id="PHI:6748"/>
<dbReference type="PHI-base" id="PHI:6996"/>
<dbReference type="PHI-base" id="PHI:7656"/>
<dbReference type="PHI-base" id="PHI:8547"/>
<dbReference type="PHI-base" id="PHI:8822"/>
<dbReference type="PHI-base" id="PHI:9366"/>
<dbReference type="PHI-base" id="PHI:9432"/>
<dbReference type="Proteomes" id="UP000002438">
    <property type="component" value="Chromosome"/>
</dbReference>
<dbReference type="CollecTF" id="EXPREG_00000b10"/>
<dbReference type="GO" id="GO:0005737">
    <property type="term" value="C:cytoplasm"/>
    <property type="evidence" value="ECO:0007669"/>
    <property type="project" value="UniProtKB-SubCell"/>
</dbReference>
<dbReference type="GO" id="GO:0032993">
    <property type="term" value="C:protein-DNA complex"/>
    <property type="evidence" value="ECO:0000315"/>
    <property type="project" value="CollecTF"/>
</dbReference>
<dbReference type="GO" id="GO:0001216">
    <property type="term" value="F:DNA-binding transcription activator activity"/>
    <property type="evidence" value="ECO:0000315"/>
    <property type="project" value="CollecTF"/>
</dbReference>
<dbReference type="GO" id="GO:0003700">
    <property type="term" value="F:DNA-binding transcription factor activity"/>
    <property type="evidence" value="ECO:0000304"/>
    <property type="project" value="PHI-base"/>
</dbReference>
<dbReference type="GO" id="GO:0001217">
    <property type="term" value="F:DNA-binding transcription repressor activity"/>
    <property type="evidence" value="ECO:0000315"/>
    <property type="project" value="CollecTF"/>
</dbReference>
<dbReference type="GO" id="GO:0038023">
    <property type="term" value="F:signaling receptor activity"/>
    <property type="evidence" value="ECO:0000304"/>
    <property type="project" value="PHI-base"/>
</dbReference>
<dbReference type="GO" id="GO:0000976">
    <property type="term" value="F:transcription cis-regulatory region binding"/>
    <property type="evidence" value="ECO:0000315"/>
    <property type="project" value="CollecTF"/>
</dbReference>
<dbReference type="GO" id="GO:0010467">
    <property type="term" value="P:gene expression"/>
    <property type="evidence" value="ECO:0000315"/>
    <property type="project" value="CACAO"/>
</dbReference>
<dbReference type="GO" id="GO:0045893">
    <property type="term" value="P:positive regulation of DNA-templated transcription"/>
    <property type="evidence" value="ECO:0000270"/>
    <property type="project" value="CollecTF"/>
</dbReference>
<dbReference type="GO" id="GO:0046889">
    <property type="term" value="P:positive regulation of lipid biosynthetic process"/>
    <property type="evidence" value="ECO:0000315"/>
    <property type="project" value="PseudoCAP"/>
</dbReference>
<dbReference type="GO" id="GO:0045862">
    <property type="term" value="P:positive regulation of proteolysis"/>
    <property type="evidence" value="ECO:0000315"/>
    <property type="project" value="PseudoCAP"/>
</dbReference>
<dbReference type="GO" id="GO:0062162">
    <property type="term" value="P:positive regulation of pyocyanine biosynthetic process"/>
    <property type="evidence" value="ECO:0000315"/>
    <property type="project" value="PHI-base"/>
</dbReference>
<dbReference type="GO" id="GO:1900378">
    <property type="term" value="P:positive regulation of secondary metabolite biosynthetic process"/>
    <property type="evidence" value="ECO:0000315"/>
    <property type="project" value="PseudoCAP"/>
</dbReference>
<dbReference type="GO" id="GO:0009372">
    <property type="term" value="P:quorum sensing"/>
    <property type="evidence" value="ECO:0007669"/>
    <property type="project" value="UniProtKB-KW"/>
</dbReference>
<dbReference type="CDD" id="cd06170">
    <property type="entry name" value="LuxR_C_like"/>
    <property type="match status" value="1"/>
</dbReference>
<dbReference type="FunFam" id="1.10.10.10:FF:000297">
    <property type="entry name" value="DNA-binding transcriptional activator SdiA"/>
    <property type="match status" value="1"/>
</dbReference>
<dbReference type="Gene3D" id="3.30.450.80">
    <property type="entry name" value="Transcription factor LuxR-like, autoinducer-binding domain"/>
    <property type="match status" value="1"/>
</dbReference>
<dbReference type="Gene3D" id="1.10.10.10">
    <property type="entry name" value="Winged helix-like DNA-binding domain superfamily/Winged helix DNA-binding domain"/>
    <property type="match status" value="1"/>
</dbReference>
<dbReference type="InterPro" id="IPR016032">
    <property type="entry name" value="Sig_transdc_resp-reg_C-effctor"/>
</dbReference>
<dbReference type="InterPro" id="IPR005143">
    <property type="entry name" value="TF_LuxR_autoind-bd_dom"/>
</dbReference>
<dbReference type="InterPro" id="IPR036693">
    <property type="entry name" value="TF_LuxR_autoind-bd_dom_sf"/>
</dbReference>
<dbReference type="InterPro" id="IPR000792">
    <property type="entry name" value="Tscrpt_reg_LuxR_C"/>
</dbReference>
<dbReference type="InterPro" id="IPR036388">
    <property type="entry name" value="WH-like_DNA-bd_sf"/>
</dbReference>
<dbReference type="NCBIfam" id="NF007561">
    <property type="entry name" value="PRK10188.1"/>
    <property type="match status" value="1"/>
</dbReference>
<dbReference type="PANTHER" id="PTHR44688">
    <property type="entry name" value="DNA-BINDING TRANSCRIPTIONAL ACTIVATOR DEVR_DOSR"/>
    <property type="match status" value="1"/>
</dbReference>
<dbReference type="PANTHER" id="PTHR44688:SF16">
    <property type="entry name" value="DNA-BINDING TRANSCRIPTIONAL ACTIVATOR DEVR_DOSR"/>
    <property type="match status" value="1"/>
</dbReference>
<dbReference type="Pfam" id="PF03472">
    <property type="entry name" value="Autoind_bind"/>
    <property type="match status" value="1"/>
</dbReference>
<dbReference type="Pfam" id="PF00196">
    <property type="entry name" value="GerE"/>
    <property type="match status" value="1"/>
</dbReference>
<dbReference type="PRINTS" id="PR00038">
    <property type="entry name" value="HTHLUXR"/>
</dbReference>
<dbReference type="SMART" id="SM00421">
    <property type="entry name" value="HTH_LUXR"/>
    <property type="match status" value="1"/>
</dbReference>
<dbReference type="SUPFAM" id="SSF46894">
    <property type="entry name" value="C-terminal effector domain of the bipartite response regulators"/>
    <property type="match status" value="1"/>
</dbReference>
<dbReference type="SUPFAM" id="SSF75516">
    <property type="entry name" value="Pheromone-binding domain of LuxR-like quorum-sensing transcription factors"/>
    <property type="match status" value="1"/>
</dbReference>
<dbReference type="PROSITE" id="PS00622">
    <property type="entry name" value="HTH_LUXR_1"/>
    <property type="match status" value="1"/>
</dbReference>
<dbReference type="PROSITE" id="PS50043">
    <property type="entry name" value="HTH_LUXR_2"/>
    <property type="match status" value="1"/>
</dbReference>
<reference key="1">
    <citation type="journal article" date="1995" name="J. Bacteriol.">
        <title>Synthesis of multiple exoproducts in Pseudomonas aeruginosa is under the control of RhlR-RhlI, another set of regulators in strain PAO1 with homology to the autoinducer-responsive LuxR-LuxI family.</title>
        <authorList>
            <person name="Brint J.M."/>
            <person name="Ohman D.E."/>
        </authorList>
    </citation>
    <scope>NUCLEOTIDE SEQUENCE [GENOMIC DNA]</scope>
    <scope>FUNCTION</scope>
    <scope>DISRUPTION PHENOTYPE</scope>
    <source>
        <strain>ATCC 15692 / DSM 22644 / CIP 104116 / JCM 14847 / LMG 12228 / 1C / PRS 101 / PAO1</strain>
    </source>
</reference>
<reference key="2">
    <citation type="journal article" date="1994" name="J. Bacteriol.">
        <title>Isolation and characterization of a regulatory gene affecting rhamnolipid biosurfactant synthesis in Pseudomonas aeruginosa.</title>
        <authorList>
            <person name="Ochsner U.A."/>
            <person name="Koch A.K."/>
            <person name="Fiechter A."/>
            <person name="Reiser J."/>
        </authorList>
    </citation>
    <scope>NUCLEOTIDE SEQUENCE [GENOMIC DNA]</scope>
    <scope>FUNCTION</scope>
    <scope>DISRUPTION PHENOTYPE</scope>
    <source>
        <strain>DSM 2659 / PG201</strain>
    </source>
</reference>
<reference key="3">
    <citation type="journal article" date="1995" name="Mol. Microbiol.">
        <title>Multiple homologues of LuxR and LuxI control expression of virulence determinants and secondary metabolites through quorum sensing in Pseudomonas aeruginosa PAO1.</title>
        <authorList>
            <person name="Latifi A."/>
            <person name="Winson M.K."/>
            <person name="Foglino M."/>
            <person name="Bycroft B.W."/>
            <person name="Stewart G.S.A.B."/>
            <person name="Lazdunski A."/>
            <person name="Williams P."/>
        </authorList>
    </citation>
    <scope>NUCLEOTIDE SEQUENCE [GENOMIC DNA]</scope>
    <scope>FUNCTION IN QUORUM SENSING</scope>
    <source>
        <strain>ATCC 15692 / DSM 22644 / CIP 104116 / JCM 14847 / LMG 12228 / 1C / PRS 101 / PAO1</strain>
    </source>
</reference>
<reference key="4">
    <citation type="journal article" date="2000" name="Nature">
        <title>Complete genome sequence of Pseudomonas aeruginosa PAO1, an opportunistic pathogen.</title>
        <authorList>
            <person name="Stover C.K."/>
            <person name="Pham X.-Q.T."/>
            <person name="Erwin A.L."/>
            <person name="Mizoguchi S.D."/>
            <person name="Warrener P."/>
            <person name="Hickey M.J."/>
            <person name="Brinkman F.S.L."/>
            <person name="Hufnagle W.O."/>
            <person name="Kowalik D.J."/>
            <person name="Lagrou M."/>
            <person name="Garber R.L."/>
            <person name="Goltry L."/>
            <person name="Tolentino E."/>
            <person name="Westbrock-Wadman S."/>
            <person name="Yuan Y."/>
            <person name="Brody L.L."/>
            <person name="Coulter S.N."/>
            <person name="Folger K.R."/>
            <person name="Kas A."/>
            <person name="Larbig K."/>
            <person name="Lim R.M."/>
            <person name="Smith K.A."/>
            <person name="Spencer D.H."/>
            <person name="Wong G.K.-S."/>
            <person name="Wu Z."/>
            <person name="Paulsen I.T."/>
            <person name="Reizer J."/>
            <person name="Saier M.H. Jr."/>
            <person name="Hancock R.E.W."/>
            <person name="Lory S."/>
            <person name="Olson M.V."/>
        </authorList>
    </citation>
    <scope>NUCLEOTIDE SEQUENCE [LARGE SCALE GENOMIC DNA]</scope>
    <source>
        <strain>ATCC 15692 / DSM 22644 / CIP 104116 / JCM 14847 / LMG 12228 / 1C / PRS 101 / PAO1</strain>
    </source>
</reference>
<reference key="5">
    <citation type="journal article" date="1994" name="J. Biol. Chem.">
        <title>Isolation, characterization, and expression in Escherichia coli of the Pseudomonas aeruginosa rhlAB genes encoding a rhamnosyltransferase involved in rhamnolipid biosurfactant synthesis.</title>
        <authorList>
            <person name="Ochsner U.A."/>
            <person name="Fiechter A."/>
            <person name="Reiser J."/>
        </authorList>
    </citation>
    <scope>NUCLEOTIDE SEQUENCE [GENOMIC DNA] OF 1-11</scope>
    <source>
        <strain>DSM 2659 / PG201</strain>
    </source>
</reference>
<reference key="6">
    <citation type="journal article" date="1995" name="Proc. Natl. Acad. Sci. U.S.A.">
        <title>Autoinducer-mediated regulation of rhamnolipid biosurfactant synthesis in Pseudomonas aeruginosa.</title>
        <authorList>
            <person name="Ochsner U.A."/>
            <person name="Reiser J."/>
        </authorList>
    </citation>
    <scope>NUCLEOTIDE SEQUENCE [GENOMIC DNA] OF 232-241</scope>
    <scope>FUNCTION</scope>
    <scope>ACTIVITY REGULATION</scope>
    <scope>DISRUPTION PHENOTYPE</scope>
    <source>
        <strain>DSM 2659 / PG201</strain>
    </source>
</reference>
<reference key="7">
    <citation type="journal article" date="2003" name="J. Bacteriol.">
        <title>Mechanism of Pseudomonas aeruginosa RhlR transcriptional regulation of the rhlAB promoter.</title>
        <authorList>
            <person name="Medina G."/>
            <person name="Juarez K."/>
            <person name="Valderrama B."/>
            <person name="Soberon-Chavez G."/>
        </authorList>
    </citation>
    <scope>FUNCTION</scope>
    <scope>DNA-BINDING</scope>
    <scope>ACTIVITY REGULATION</scope>
</reference>
<reference key="8">
    <citation type="journal article" date="2003" name="Microbiology">
        <title>Transcriptional regulation of Pseudomonas aeruginosa rhlR, encoding a quorum-sensing regulatory protein.</title>
        <authorList>
            <person name="Medina G."/>
            <person name="Juarez K."/>
            <person name="Diaz R."/>
            <person name="Soberon-Chavez G."/>
        </authorList>
    </citation>
    <scope>TRANSCRIPTIONAL REGULATION</scope>
    <source>
        <strain>ATCC 15692 / DSM 22644 / CIP 104116 / JCM 14847 / LMG 12228 / 1C / PRS 101 / PAO1</strain>
    </source>
</reference>
<reference key="9">
    <citation type="journal article" date="2003" name="Mol. Microbiol.">
        <title>Dimerization of the quorum sensing regulator RhlR: development of a method using EGFP fluorescence anisotropy.</title>
        <authorList>
            <person name="Ventre I."/>
            <person name="Ledgham F."/>
            <person name="Prima V."/>
            <person name="Lazdunski A."/>
            <person name="Foglino M."/>
            <person name="Sturgis J.N."/>
        </authorList>
    </citation>
    <scope>SUBUNIT</scope>
    <scope>SUBCELLULAR LOCATION</scope>
    <source>
        <strain>ATCC 15692 / DSM 22644 / CIP 104116 / JCM 14847 / LMG 12228 / 1C / PRS 101 / PAO1</strain>
    </source>
</reference>
<reference key="10">
    <citation type="journal article" date="2004" name="Vaccine">
        <title>Transcriptome analysis of quorum-sensing regulation and virulence factor expression in Pseudomonas aeruginosa.</title>
        <authorList>
            <person name="Wagner V.E."/>
            <person name="Gillis R.J."/>
            <person name="Iglewski B.H."/>
        </authorList>
    </citation>
    <scope>FUNCTION</scope>
    <source>
        <strain>ATCC 15692 / DSM 22644 / CIP 104116 / JCM 14847 / LMG 12228 / 1C / PRS 101 / PAO1</strain>
    </source>
</reference>
<reference key="11">
    <citation type="journal article" date="2012" name="Microbiology">
        <title>The Pseudomonas aeruginosa rmlBDAC operon, encoding dTDP-L-rhamnose biosynthetic enzymes, is regulated by the quorum-sensing transcriptional regulator RhlR and the alternative sigma factor sigmaS.</title>
        <authorList>
            <person name="Aguirre-Ramirez M."/>
            <person name="Medina G."/>
            <person name="Gonzalez-Valdez A."/>
            <person name="Grosso-Becerra V."/>
            <person name="Soberon-Chavez G."/>
        </authorList>
    </citation>
    <scope>FUNCTION</scope>
    <scope>DNA-BINDING</scope>
    <source>
        <strain>ATCC 15692 / DSM 22644 / CIP 104116 / JCM 14847 / LMG 12228 / 1C / PRS 101 / PAO1</strain>
    </source>
</reference>
<reference key="12">
    <citation type="journal article" date="2016" name="Sci. Signal.">
        <title>Rosmarinic acid is a homoserine lactone mimic produced by plants that activates a bacterial quorum-sensing regulator.</title>
        <authorList>
            <person name="Corral-Lugo A."/>
            <person name="Daddaoua A."/>
            <person name="Ortega A."/>
            <person name="Espinosa-Urgel M."/>
            <person name="Krell T."/>
        </authorList>
    </citation>
    <scope>ACTIVITY REGULATION</scope>
    <scope>INTERACTION WITH ROSMARINIC ACID</scope>
    <source>
        <strain>ATCC 15692 / DSM 22644 / CIP 104116 / JCM 14847 / LMG 12228 / 1C / PRS 101 / PAO1</strain>
    </source>
</reference>
<reference key="13">
    <citation type="journal article" date="2018" name="Environ. Microbiol.">
        <title>The plant compound rosmarinic acid induces a broad quorum sensing response in Pseudomonas aeruginosa PAO1.</title>
        <authorList>
            <person name="Fernandez M."/>
            <person name="Corral-Lugo A."/>
            <person name="Krell T."/>
        </authorList>
    </citation>
    <scope>ACTIVITY REGULATION</scope>
    <scope>INTERACTION WITH ROSMARINIC ACID</scope>
    <source>
        <strain>ATCC 15692 / DSM 22644 / CIP 104116 / JCM 14847 / LMG 12228 / 1C / PRS 101 / PAO1</strain>
    </source>
</reference>
<organism>
    <name type="scientific">Pseudomonas aeruginosa (strain ATCC 15692 / DSM 22644 / CIP 104116 / JCM 14847 / LMG 12228 / 1C / PRS 101 / PAO1)</name>
    <dbReference type="NCBI Taxonomy" id="208964"/>
    <lineage>
        <taxon>Bacteria</taxon>
        <taxon>Pseudomonadati</taxon>
        <taxon>Pseudomonadota</taxon>
        <taxon>Gammaproteobacteria</taxon>
        <taxon>Pseudomonadales</taxon>
        <taxon>Pseudomonadaceae</taxon>
        <taxon>Pseudomonas</taxon>
    </lineage>
</organism>
<feature type="chain" id="PRO_0000184186" description="HTH-type quorum-sensing regulator RhlR">
    <location>
        <begin position="1"/>
        <end position="241"/>
    </location>
</feature>
<feature type="domain" description="HTH luxR-type" evidence="1">
    <location>
        <begin position="174"/>
        <end position="239"/>
    </location>
</feature>
<feature type="DNA-binding region" description="H-T-H motif" evidence="1">
    <location>
        <begin position="198"/>
        <end position="217"/>
    </location>
</feature>
<feature type="sequence conflict" description="In Ref. 3; AAA89073." evidence="16" ref="3">
    <original>D</original>
    <variation>H</variation>
    <location>
        <position position="12"/>
    </location>
</feature>
<feature type="sequence conflict" description="In Ref. 3; AAA89073." evidence="16" ref="3">
    <original>S</original>
    <variation>C</variation>
    <location>
        <position position="16"/>
    </location>
</feature>
<feature type="sequence conflict" description="In Ref. 3; AAA89073." evidence="16" ref="3">
    <original>S</original>
    <variation>R</variation>
    <location>
        <position position="99"/>
    </location>
</feature>
<feature type="helix" evidence="17">
    <location>
        <begin position="7"/>
        <end position="19"/>
    </location>
</feature>
<feature type="helix" evidence="17">
    <location>
        <begin position="24"/>
        <end position="37"/>
    </location>
</feature>
<feature type="strand" evidence="17">
    <location>
        <begin position="41"/>
        <end position="48"/>
    </location>
</feature>
<feature type="strand" evidence="17">
    <location>
        <begin position="52"/>
        <end position="55"/>
    </location>
</feature>
<feature type="strand" evidence="17">
    <location>
        <begin position="58"/>
        <end position="62"/>
    </location>
</feature>
<feature type="helix" evidence="17">
    <location>
        <begin position="66"/>
        <end position="74"/>
    </location>
</feature>
<feature type="helix" evidence="17">
    <location>
        <begin position="77"/>
        <end position="79"/>
    </location>
</feature>
<feature type="helix" evidence="17">
    <location>
        <begin position="82"/>
        <end position="84"/>
    </location>
</feature>
<feature type="helix" evidence="18">
    <location>
        <begin position="86"/>
        <end position="88"/>
    </location>
</feature>
<feature type="strand" evidence="17">
    <location>
        <begin position="92"/>
        <end position="95"/>
    </location>
</feature>
<feature type="turn" evidence="17">
    <location>
        <begin position="98"/>
        <end position="103"/>
    </location>
</feature>
<feature type="helix" evidence="17">
    <location>
        <begin position="105"/>
        <end position="113"/>
    </location>
</feature>
<feature type="strand" evidence="17">
    <location>
        <begin position="118"/>
        <end position="125"/>
    </location>
</feature>
<feature type="strand" evidence="17">
    <location>
        <begin position="131"/>
        <end position="141"/>
    </location>
</feature>
<feature type="helix" evidence="17">
    <location>
        <begin position="145"/>
        <end position="147"/>
    </location>
</feature>
<feature type="helix" evidence="17">
    <location>
        <begin position="148"/>
        <end position="168"/>
    </location>
</feature>
<feature type="turn" evidence="17">
    <location>
        <begin position="172"/>
        <end position="174"/>
    </location>
</feature>
<feature type="helix" evidence="17">
    <location>
        <begin position="183"/>
        <end position="193"/>
    </location>
</feature>
<feature type="helix" evidence="17">
    <location>
        <begin position="198"/>
        <end position="205"/>
    </location>
</feature>
<feature type="helix" evidence="17">
    <location>
        <begin position="209"/>
        <end position="222"/>
    </location>
</feature>
<feature type="helix" evidence="17">
    <location>
        <begin position="228"/>
        <end position="237"/>
    </location>
</feature>
<protein>
    <recommendedName>
        <fullName evidence="16">HTH-type quorum-sensing regulator RhlR</fullName>
    </recommendedName>
    <alternativeName>
        <fullName evidence="15">Elastase modulator</fullName>
    </alternativeName>
    <alternativeName>
        <fullName>Regulatory protein RhlR</fullName>
    </alternativeName>
</protein>
<accession>P54292</accession>
<accession>Q9HYD2</accession>
<proteinExistence type="evidence at protein level"/>
<name>RHLR_PSEAE</name>
<keyword id="KW-0002">3D-structure</keyword>
<keyword id="KW-0010">Activator</keyword>
<keyword id="KW-0963">Cytoplasm</keyword>
<keyword id="KW-0238">DNA-binding</keyword>
<keyword id="KW-0673">Quorum sensing</keyword>
<keyword id="KW-1185">Reference proteome</keyword>
<keyword id="KW-0678">Repressor</keyword>
<keyword id="KW-0804">Transcription</keyword>
<keyword id="KW-0805">Transcription regulation</keyword>
<comment type="function">
    <text evidence="3 5 6 9 10 11 12">Quorum-sensing regulator that controls the expression of multiple virulence factors in response to extracellular signaling molecules called autoinducers (PubMed:15576196, PubMed:7494482, PubMed:8522523). Involved, among others, in the transcriptional regulation of genes that are responsible for rhamnolipid surfactant biosynthesis (PubMed:14526008, PubMed:7604006, PubMed:8144472). Acts by binding to a specific sequence in the rhlAB regulatory region, both in the presence and in the absence of its autoinducer (PubMed:14526008). In the former case it activates transcription of the promoter, whereas in the latter it acts as a transcriptional repressor (PubMed:14526008). Also regulates the expression of the rmlBDAC operon, encoding dTDP-L-rhamnose biosynthetic enzymes, by binding to the rml box in the promoter region (PubMed:22262098). In addition, is involved in the regulation of the production of elastase (lasB) and pyocyanine (PubMed:7604006, PubMed:8144472, PubMed:8522523).</text>
</comment>
<comment type="activity regulation">
    <text evidence="3 7 8 10">Activated by interaction with the autoinducer signal molecule N-butanoyl-L-homoserine lactone (C4-HSL or BHL), the product of the RhlI synthase (PubMed:14526008, PubMed:26732761, PubMed:7604006). Is also activated by binding to rosmarinic acid (RA), a homoserine lactone mimic produced by plants, which induces a broad quorum sensing response, including the induction of all major quorum sensing controlled virulence factors. Rosmarinic acid secretion may be a plant defense mechanism to stimulate a premature quorum sensing response (PubMed:26732761, PubMed:30051572).</text>
</comment>
<comment type="subunit">
    <text evidence="2">Homodimer in the absence of any acyl-L-homoserine lactone (PubMed:12657054). The presence of the autoinducer C4-HSL has no significant effect on dimerization whereas N-(3-oxododecanoyl)-L-homoserine lactone (3O-C12-HSL), the LasR inducer, is able to dissociate the RhlR homodimers into monomers (PubMed:12657054).</text>
</comment>
<comment type="subcellular location">
    <subcellularLocation>
        <location evidence="2">Cytoplasm</location>
    </subcellularLocation>
</comment>
<comment type="induction">
    <text evidence="4">The rhlR promoter region contains four different transcription start sites, two of which are included in the upstream gene (rhlB) coding region. The rhlR gene is subject to a complex transcriptional regulation. Expression is dependent on LasR and on different regulatory proteins such as Vfr and RhlR itself, and also on the alternative sigma factor sigma(54). Expression is partially LasR-independent under certain culture conditions and is strongly influenced by environmental factors.</text>
</comment>
<comment type="disruption phenotype">
    <text evidence="10 11 12">Disruption mutant shows defects in the production of rhamnolipids, elastase and pyocyanine (PubMed:7604006, PubMed:8144472, PubMed:8522523). It also exhibits reduced LasA protease activity and casein-degrading activity (PubMed:8522523).</text>
</comment>
<comment type="similarity">
    <text evidence="16">Belongs to the autoinducer-regulated transcriptional regulatory protein family.</text>
</comment>